<protein>
    <recommendedName>
        <fullName evidence="1">Peptide deformylase</fullName>
        <shortName evidence="1">PDF</shortName>
        <ecNumber evidence="1">3.5.1.88</ecNumber>
    </recommendedName>
    <alternativeName>
        <fullName evidence="1">Polypeptide deformylase</fullName>
    </alternativeName>
</protein>
<gene>
    <name evidence="1" type="primary">def</name>
    <name type="ordered locus">Syncc9605_2274</name>
</gene>
<proteinExistence type="inferred from homology"/>
<reference key="1">
    <citation type="submission" date="2005-07" db="EMBL/GenBank/DDBJ databases">
        <title>Complete sequence of Synechococcus sp. CC9605.</title>
        <authorList>
            <consortium name="US DOE Joint Genome Institute"/>
            <person name="Copeland A."/>
            <person name="Lucas S."/>
            <person name="Lapidus A."/>
            <person name="Barry K."/>
            <person name="Detter J.C."/>
            <person name="Glavina T."/>
            <person name="Hammon N."/>
            <person name="Israni S."/>
            <person name="Pitluck S."/>
            <person name="Schmutz J."/>
            <person name="Martinez M."/>
            <person name="Larimer F."/>
            <person name="Land M."/>
            <person name="Kyrpides N."/>
            <person name="Ivanova N."/>
            <person name="Richardson P."/>
        </authorList>
    </citation>
    <scope>NUCLEOTIDE SEQUENCE [LARGE SCALE GENOMIC DNA]</scope>
    <source>
        <strain>CC9605</strain>
    </source>
</reference>
<sequence length="201" mass="22256">MAGSFAELARQADKSRDTMLVPKTALETPPLEIHTLGDEVLRQPARRIGKVNEQVRELARDMLRSMYTAKGIGLAAPQVGIHQQLLVIDLDLENAATPPLVLINPEITAASAGLDTYEEGCLSIPGVYLDVVRPTAIELSFRDEMGRPRKMKADGLMARCIQHEMDHLNGVLFVDRVTDQDGLQKELKEKGFERQDVRSVA</sequence>
<comment type="function">
    <text evidence="1">Removes the formyl group from the N-terminal Met of newly synthesized proteins. Requires at least a dipeptide for an efficient rate of reaction. N-terminal L-methionine is a prerequisite for activity but the enzyme has broad specificity at other positions.</text>
</comment>
<comment type="catalytic activity">
    <reaction evidence="1">
        <text>N-terminal N-formyl-L-methionyl-[peptide] + H2O = N-terminal L-methionyl-[peptide] + formate</text>
        <dbReference type="Rhea" id="RHEA:24420"/>
        <dbReference type="Rhea" id="RHEA-COMP:10639"/>
        <dbReference type="Rhea" id="RHEA-COMP:10640"/>
        <dbReference type="ChEBI" id="CHEBI:15377"/>
        <dbReference type="ChEBI" id="CHEBI:15740"/>
        <dbReference type="ChEBI" id="CHEBI:49298"/>
        <dbReference type="ChEBI" id="CHEBI:64731"/>
        <dbReference type="EC" id="3.5.1.88"/>
    </reaction>
</comment>
<comment type="cofactor">
    <cofactor evidence="1">
        <name>Fe(2+)</name>
        <dbReference type="ChEBI" id="CHEBI:29033"/>
    </cofactor>
    <text evidence="1">Binds 1 Fe(2+) ion.</text>
</comment>
<comment type="similarity">
    <text evidence="1">Belongs to the polypeptide deformylase family.</text>
</comment>
<dbReference type="EC" id="3.5.1.88" evidence="1"/>
<dbReference type="EMBL" id="CP000110">
    <property type="protein sequence ID" value="ABB36008.1"/>
    <property type="molecule type" value="Genomic_DNA"/>
</dbReference>
<dbReference type="RefSeq" id="WP_011365206.1">
    <property type="nucleotide sequence ID" value="NC_007516.1"/>
</dbReference>
<dbReference type="SMR" id="Q3AHC4"/>
<dbReference type="STRING" id="110662.Syncc9605_2274"/>
<dbReference type="KEGG" id="syd:Syncc9605_2274"/>
<dbReference type="eggNOG" id="COG0242">
    <property type="taxonomic scope" value="Bacteria"/>
</dbReference>
<dbReference type="HOGENOM" id="CLU_061901_4_2_3"/>
<dbReference type="OrthoDB" id="9784988at2"/>
<dbReference type="GO" id="GO:0046872">
    <property type="term" value="F:metal ion binding"/>
    <property type="evidence" value="ECO:0007669"/>
    <property type="project" value="UniProtKB-KW"/>
</dbReference>
<dbReference type="GO" id="GO:0042586">
    <property type="term" value="F:peptide deformylase activity"/>
    <property type="evidence" value="ECO:0007669"/>
    <property type="project" value="UniProtKB-UniRule"/>
</dbReference>
<dbReference type="GO" id="GO:0043686">
    <property type="term" value="P:co-translational protein modification"/>
    <property type="evidence" value="ECO:0007669"/>
    <property type="project" value="TreeGrafter"/>
</dbReference>
<dbReference type="GO" id="GO:0006412">
    <property type="term" value="P:translation"/>
    <property type="evidence" value="ECO:0007669"/>
    <property type="project" value="UniProtKB-UniRule"/>
</dbReference>
<dbReference type="CDD" id="cd00487">
    <property type="entry name" value="Pep_deformylase"/>
    <property type="match status" value="1"/>
</dbReference>
<dbReference type="FunFam" id="3.90.45.10:FF:000005">
    <property type="entry name" value="Peptide deformylase"/>
    <property type="match status" value="1"/>
</dbReference>
<dbReference type="Gene3D" id="3.90.45.10">
    <property type="entry name" value="Peptide deformylase"/>
    <property type="match status" value="1"/>
</dbReference>
<dbReference type="HAMAP" id="MF_00163">
    <property type="entry name" value="Pep_deformylase"/>
    <property type="match status" value="1"/>
</dbReference>
<dbReference type="InterPro" id="IPR023635">
    <property type="entry name" value="Peptide_deformylase"/>
</dbReference>
<dbReference type="InterPro" id="IPR036821">
    <property type="entry name" value="Peptide_deformylase_sf"/>
</dbReference>
<dbReference type="NCBIfam" id="TIGR00079">
    <property type="entry name" value="pept_deformyl"/>
    <property type="match status" value="1"/>
</dbReference>
<dbReference type="NCBIfam" id="NF001159">
    <property type="entry name" value="PRK00150.1-3"/>
    <property type="match status" value="1"/>
</dbReference>
<dbReference type="PANTHER" id="PTHR10458">
    <property type="entry name" value="PEPTIDE DEFORMYLASE"/>
    <property type="match status" value="1"/>
</dbReference>
<dbReference type="PANTHER" id="PTHR10458:SF22">
    <property type="entry name" value="PEPTIDE DEFORMYLASE"/>
    <property type="match status" value="1"/>
</dbReference>
<dbReference type="Pfam" id="PF01327">
    <property type="entry name" value="Pep_deformylase"/>
    <property type="match status" value="1"/>
</dbReference>
<dbReference type="PIRSF" id="PIRSF004749">
    <property type="entry name" value="Pep_def"/>
    <property type="match status" value="1"/>
</dbReference>
<dbReference type="PRINTS" id="PR01576">
    <property type="entry name" value="PDEFORMYLASE"/>
</dbReference>
<dbReference type="SUPFAM" id="SSF56420">
    <property type="entry name" value="Peptide deformylase"/>
    <property type="match status" value="1"/>
</dbReference>
<organism>
    <name type="scientific">Synechococcus sp. (strain CC9605)</name>
    <dbReference type="NCBI Taxonomy" id="110662"/>
    <lineage>
        <taxon>Bacteria</taxon>
        <taxon>Bacillati</taxon>
        <taxon>Cyanobacteriota</taxon>
        <taxon>Cyanophyceae</taxon>
        <taxon>Synechococcales</taxon>
        <taxon>Synechococcaceae</taxon>
        <taxon>Synechococcus</taxon>
    </lineage>
</organism>
<evidence type="ECO:0000255" key="1">
    <source>
        <dbReference type="HAMAP-Rule" id="MF_00163"/>
    </source>
</evidence>
<accession>Q3AHC4</accession>
<keyword id="KW-0378">Hydrolase</keyword>
<keyword id="KW-0408">Iron</keyword>
<keyword id="KW-0479">Metal-binding</keyword>
<keyword id="KW-0648">Protein biosynthesis</keyword>
<feature type="chain" id="PRO_0000301116" description="Peptide deformylase">
    <location>
        <begin position="1"/>
        <end position="201"/>
    </location>
</feature>
<feature type="active site" evidence="1">
    <location>
        <position position="164"/>
    </location>
</feature>
<feature type="binding site" evidence="1">
    <location>
        <position position="121"/>
    </location>
    <ligand>
        <name>Fe cation</name>
        <dbReference type="ChEBI" id="CHEBI:24875"/>
    </ligand>
</feature>
<feature type="binding site" evidence="1">
    <location>
        <position position="163"/>
    </location>
    <ligand>
        <name>Fe cation</name>
        <dbReference type="ChEBI" id="CHEBI:24875"/>
    </ligand>
</feature>
<feature type="binding site" evidence="1">
    <location>
        <position position="167"/>
    </location>
    <ligand>
        <name>Fe cation</name>
        <dbReference type="ChEBI" id="CHEBI:24875"/>
    </ligand>
</feature>
<name>DEF_SYNSC</name>